<reference key="1">
    <citation type="submission" date="2007-10" db="EMBL/GenBank/DDBJ databases">
        <title>Brucella canis ATCC 23365 whole genome shotgun sequencing project.</title>
        <authorList>
            <person name="Setubal J.C."/>
            <person name="Bowns C."/>
            <person name="Boyle S."/>
            <person name="Crasta O.R."/>
            <person name="Czar M.J."/>
            <person name="Dharmanolla C."/>
            <person name="Gillespie J.J."/>
            <person name="Kenyon R.W."/>
            <person name="Lu J."/>
            <person name="Mane S."/>
            <person name="Mohapatra S."/>
            <person name="Nagrani S."/>
            <person name="Purkayastha A."/>
            <person name="Rajasimha H.K."/>
            <person name="Shallom J.M."/>
            <person name="Shallom S."/>
            <person name="Shukla M."/>
            <person name="Snyder E.E."/>
            <person name="Sobral B.W."/>
            <person name="Wattam A.R."/>
            <person name="Will R."/>
            <person name="Williams K."/>
            <person name="Yoo H."/>
            <person name="Bruce D."/>
            <person name="Detter C."/>
            <person name="Munk C."/>
            <person name="Brettin T.S."/>
        </authorList>
    </citation>
    <scope>NUCLEOTIDE SEQUENCE [LARGE SCALE GENOMIC DNA]</scope>
    <source>
        <strain>ATCC 23365 / NCTC 10854 / RM-666</strain>
    </source>
</reference>
<reference key="2">
    <citation type="journal article" date="2003" name="Nucleic Acids Res.">
        <title>A nomenclature for restriction enzymes, DNA methyltransferases, homing endonucleases and their genes.</title>
        <authorList>
            <person name="Roberts R.J."/>
            <person name="Belfort M."/>
            <person name="Bestor T."/>
            <person name="Bhagwat A.S."/>
            <person name="Bickle T.A."/>
            <person name="Bitinaite J."/>
            <person name="Blumenthal R.M."/>
            <person name="Degtyarev S.K."/>
            <person name="Dryden D.T."/>
            <person name="Dybvig K."/>
            <person name="Firman K."/>
            <person name="Gromova E.S."/>
            <person name="Gumport R.I."/>
            <person name="Halford S.E."/>
            <person name="Hattman S."/>
            <person name="Heitman J."/>
            <person name="Hornby D.P."/>
            <person name="Janulaitis A."/>
            <person name="Jeltsch A."/>
            <person name="Josephsen J."/>
            <person name="Kiss A."/>
            <person name="Klaenhammer T.R."/>
            <person name="Kobayashi I."/>
            <person name="Kong H."/>
            <person name="Krueger D.H."/>
            <person name="Lacks S."/>
            <person name="Marinus M.G."/>
            <person name="Miyahara M."/>
            <person name="Morgan R.D."/>
            <person name="Murray N.E."/>
            <person name="Nagaraja V."/>
            <person name="Piekarowicz A."/>
            <person name="Pingoud A."/>
            <person name="Raleigh E."/>
            <person name="Rao D.N."/>
            <person name="Reich N."/>
            <person name="Repin V.E."/>
            <person name="Selker E.U."/>
            <person name="Shaw P.C."/>
            <person name="Stein D.C."/>
            <person name="Stoddard B.L."/>
            <person name="Szybalski W."/>
            <person name="Trautner T.A."/>
            <person name="Van Etten J.L."/>
            <person name="Vitor J.M."/>
            <person name="Wilson G.G."/>
            <person name="Xu S.Y."/>
        </authorList>
    </citation>
    <scope>NOMENCLATURE</scope>
    <scope>SUBTYPE</scope>
</reference>
<dbReference type="EC" id="2.1.1.72"/>
<dbReference type="EMBL" id="CP000872">
    <property type="protein sequence ID" value="ABX61580.1"/>
    <property type="molecule type" value="Genomic_DNA"/>
</dbReference>
<dbReference type="RefSeq" id="WP_004689516.1">
    <property type="nucleotide sequence ID" value="NC_010103.1"/>
</dbReference>
<dbReference type="SMR" id="A9M916"/>
<dbReference type="REBASE" id="16904">
    <property type="entry name" value="M.Bca23365ORF500P"/>
</dbReference>
<dbReference type="KEGG" id="bcs:BCAN_A0500"/>
<dbReference type="HOGENOM" id="CLU_024927_5_1_5"/>
<dbReference type="Proteomes" id="UP000001385">
    <property type="component" value="Chromosome I"/>
</dbReference>
<dbReference type="GO" id="GO:0005737">
    <property type="term" value="C:cytoplasm"/>
    <property type="evidence" value="ECO:0007669"/>
    <property type="project" value="TreeGrafter"/>
</dbReference>
<dbReference type="GO" id="GO:0003677">
    <property type="term" value="F:DNA binding"/>
    <property type="evidence" value="ECO:0007669"/>
    <property type="project" value="UniProtKB-KW"/>
</dbReference>
<dbReference type="GO" id="GO:0008170">
    <property type="term" value="F:N-methyltransferase activity"/>
    <property type="evidence" value="ECO:0007669"/>
    <property type="project" value="InterPro"/>
</dbReference>
<dbReference type="GO" id="GO:0009007">
    <property type="term" value="F:site-specific DNA-methyltransferase (adenine-specific) activity"/>
    <property type="evidence" value="ECO:0007669"/>
    <property type="project" value="UniProtKB-EC"/>
</dbReference>
<dbReference type="GO" id="GO:0006260">
    <property type="term" value="P:DNA replication"/>
    <property type="evidence" value="ECO:0007669"/>
    <property type="project" value="UniProtKB-KW"/>
</dbReference>
<dbReference type="GO" id="GO:0032259">
    <property type="term" value="P:methylation"/>
    <property type="evidence" value="ECO:0007669"/>
    <property type="project" value="UniProtKB-KW"/>
</dbReference>
<dbReference type="FunFam" id="3.40.50.150:FF:000276">
    <property type="entry name" value="Methyltransferase"/>
    <property type="match status" value="1"/>
</dbReference>
<dbReference type="Gene3D" id="3.40.50.150">
    <property type="entry name" value="Vaccinia Virus protein VP39"/>
    <property type="match status" value="1"/>
</dbReference>
<dbReference type="InterPro" id="IPR002941">
    <property type="entry name" value="DNA_methylase_N4/N6"/>
</dbReference>
<dbReference type="InterPro" id="IPR002052">
    <property type="entry name" value="DNA_methylase_N6_adenine_CS"/>
</dbReference>
<dbReference type="InterPro" id="IPR040843">
    <property type="entry name" value="RAMA"/>
</dbReference>
<dbReference type="InterPro" id="IPR001091">
    <property type="entry name" value="RM_Methyltransferase"/>
</dbReference>
<dbReference type="InterPro" id="IPR029063">
    <property type="entry name" value="SAM-dependent_MTases_sf"/>
</dbReference>
<dbReference type="PANTHER" id="PTHR13370">
    <property type="entry name" value="RNA METHYLASE-RELATED"/>
    <property type="match status" value="1"/>
</dbReference>
<dbReference type="PANTHER" id="PTHR13370:SF3">
    <property type="entry name" value="TRNA (GUANINE(10)-N2)-METHYLTRANSFERASE HOMOLOG"/>
    <property type="match status" value="1"/>
</dbReference>
<dbReference type="Pfam" id="PF01555">
    <property type="entry name" value="N6_N4_Mtase"/>
    <property type="match status" value="1"/>
</dbReference>
<dbReference type="Pfam" id="PF18755">
    <property type="entry name" value="RAMA"/>
    <property type="match status" value="1"/>
</dbReference>
<dbReference type="PRINTS" id="PR00508">
    <property type="entry name" value="S21N4MTFRASE"/>
</dbReference>
<dbReference type="SUPFAM" id="SSF53335">
    <property type="entry name" value="S-adenosyl-L-methionine-dependent methyltransferases"/>
    <property type="match status" value="1"/>
</dbReference>
<dbReference type="PROSITE" id="PS00092">
    <property type="entry name" value="N6_MTASE"/>
    <property type="match status" value="1"/>
</dbReference>
<name>CCRM_BRUC2</name>
<sequence length="377" mass="42188">MSLVRLAHELPIEAPRTAWLDSIIKGDCVSALERLPDHSVDVIFADPPYNLQLGGDLHRPDQSMVSAVDDHWDQFESFQAYDAFTRAWLLACRRVLKPNGTIWVIGSYHNIFRVGTQLQDLGFWLLNDIVWRKTNPMPNFRGRRFQNAHETLIWASRDQKGKGYTFNYEAMKAANDDVQMRSDWLFPICTGSERLKDENGDKVHPTQKPEALLARIMMASSKPGDVILDPFFGSGTTGAVAKRLGRHFVGIEREQPYIDAATARINAVEPLGKAELTVMTGKRAEPRVAFTSVMEAGLLRPGTVLCDERRRFAAIVRADGTLTANGEAGSIHRIGARVQGFDACNGWTFWHFEENGVLKPIDALRKIIREQMAAAGA</sequence>
<feature type="chain" id="PRO_0000363191" description="DNA methyltransferase CcrM">
    <location>
        <begin position="1"/>
        <end position="377"/>
    </location>
</feature>
<feature type="domain" description="RAMA" evidence="3">
    <location>
        <begin position="271"/>
        <end position="373"/>
    </location>
</feature>
<proteinExistence type="inferred from homology"/>
<organism>
    <name type="scientific">Brucella canis (strain ATCC 23365 / NCTC 10854 / RM-666)</name>
    <dbReference type="NCBI Taxonomy" id="483179"/>
    <lineage>
        <taxon>Bacteria</taxon>
        <taxon>Pseudomonadati</taxon>
        <taxon>Pseudomonadota</taxon>
        <taxon>Alphaproteobacteria</taxon>
        <taxon>Hyphomicrobiales</taxon>
        <taxon>Brucellaceae</taxon>
        <taxon>Brucella/Ochrobactrum group</taxon>
        <taxon>Brucella</taxon>
    </lineage>
</organism>
<keyword id="KW-0235">DNA replication</keyword>
<keyword id="KW-0238">DNA-binding</keyword>
<keyword id="KW-0489">Methyltransferase</keyword>
<keyword id="KW-1185">Reference proteome</keyword>
<keyword id="KW-0949">S-adenosyl-L-methionine</keyword>
<keyword id="KW-0808">Transferase</keyword>
<comment type="function">
    <text evidence="1 2 4">A beta subtype methylase that recognizes the double-stranded sequence 5'-GANTC-3' and methylates A-2 on both strands (By similarity) (PubMed:12654995). CcrM-mediated methylation has important cellular functions. Contributes to the accurate cell-cycle control of DNA replication and cellular morphology (By similarity).</text>
</comment>
<comment type="catalytic activity">
    <reaction>
        <text>a 2'-deoxyadenosine in DNA + S-adenosyl-L-methionine = an N(6)-methyl-2'-deoxyadenosine in DNA + S-adenosyl-L-homocysteine + H(+)</text>
        <dbReference type="Rhea" id="RHEA:15197"/>
        <dbReference type="Rhea" id="RHEA-COMP:12418"/>
        <dbReference type="Rhea" id="RHEA-COMP:12419"/>
        <dbReference type="ChEBI" id="CHEBI:15378"/>
        <dbReference type="ChEBI" id="CHEBI:57856"/>
        <dbReference type="ChEBI" id="CHEBI:59789"/>
        <dbReference type="ChEBI" id="CHEBI:90615"/>
        <dbReference type="ChEBI" id="CHEBI:90616"/>
        <dbReference type="EC" id="2.1.1.72"/>
    </reaction>
</comment>
<comment type="similarity">
    <text evidence="5">Belongs to the N(4)/N(6)-methyltransferase family.</text>
</comment>
<accession>A9M916</accession>
<evidence type="ECO:0000250" key="1">
    <source>
        <dbReference type="UniProtKB" id="O30569"/>
    </source>
</evidence>
<evidence type="ECO:0000250" key="2">
    <source>
        <dbReference type="UniProtKB" id="Q2YMK2"/>
    </source>
</evidence>
<evidence type="ECO:0000255" key="3"/>
<evidence type="ECO:0000303" key="4">
    <source>
    </source>
</evidence>
<evidence type="ECO:0000305" key="5"/>
<gene>
    <name type="primary">ccrM</name>
    <name type="ordered locus">BCAN_A0500</name>
</gene>
<protein>
    <recommendedName>
        <fullName evidence="2">DNA methyltransferase CcrM</fullName>
        <shortName>M.CcrM</shortName>
        <ecNumber>2.1.1.72</ecNumber>
    </recommendedName>
    <alternativeName>
        <fullName>Adenine-specific methyltransferase BabI</fullName>
    </alternativeName>
    <alternativeName>
        <fullName evidence="4">Type II methyltransferase M.Bca23365ORF500P</fullName>
        <shortName evidence="4">M.Bca23365ORF500P</shortName>
    </alternativeName>
</protein>